<keyword id="KW-1185">Reference proteome</keyword>
<proteinExistence type="inferred from homology"/>
<sequence>MAAGLPPLVVSPDLVKSRPERPAGQAPAQSPDAPEVQAQPSAPARSLPTPESPPPAVALPPVGTPAEPAAGAAPAESGPIAAGATEIRAQQISGTRAVELVAEGNAELRRDGILLSADRLTYSELTDEARAEGNVLVAQGTDRVEGPRANLKIAEQVGEFEAPQYRFSRRSDPAPGEPVREISGSGHADVMHFEGENQYRLENATWSTCQADDPDWYIKARDLELDYDREVGVVRGGSVIFQDVPIFWWPWAEFPLVAQRQSGFLSPTVGVSNKAGVDISVPYYWNLAPNYDATFAPRFMGRRGVQLGGEFRYLTPGYRGESRVEWLPRDAVTGEERALGSVQHQQQITPNLYGSLDLNAVSDDQYFEDLSSRLSVASQVNLLREGRLSYVASDWWSASALVQSYQTLSGEDPYRRLPQLLLNANRQDMAAGTVFGFRGEYVQFEHTDSRKPEGSRFTLYPQLSLPFERPGYYVTPKIGVHHTQYALDRDLSGESDSITRSLPIFTLDSGLNFERDTTLFAREYLQTLEPRIYYVRTPYRNQDDIPVFDTARFDFGFAQIFSENLYAGGDRIADANQVTAAVTSRLIDPGTGAERMRATIGQRYYFDEQRVALPGEPRRGERRADMLAAFSGRVTTSSSIDSAWQYNPREQLTERFNFAVRYQPEFAKALNLGYRYSREVLEDLDLSGQWPLGGGWYGVARVTRSLKENRITETIAGLEYDGGCWVVRSAVHRFATNPDDVTEALFVQLELNGLASVGSSPVNLLKRSVAGYGKINEPVSDRVFGAY</sequence>
<accession>Q5P7I8</accession>
<comment type="function">
    <text evidence="1">Together with LptE, is involved in the assembly of lipopolysaccharide (LPS) at the surface of the outer membrane.</text>
</comment>
<comment type="subunit">
    <text evidence="1">Component of the lipopolysaccharide transport and assembly complex. Interacts with LptE and LptA.</text>
</comment>
<comment type="similarity">
    <text evidence="1">Belongs to the LptD family.</text>
</comment>
<comment type="caution">
    <text evidence="3">No signal sequence is predicted for this protein. All LptD proteins in this family possess a predicted signal sequence and are located on the bacterial outer membrane.</text>
</comment>
<reference key="1">
    <citation type="journal article" date="2005" name="Arch. Microbiol.">
        <title>The genome sequence of an anaerobic aromatic-degrading denitrifying bacterium, strain EbN1.</title>
        <authorList>
            <person name="Rabus R."/>
            <person name="Kube M."/>
            <person name="Heider J."/>
            <person name="Beck A."/>
            <person name="Heitmann K."/>
            <person name="Widdel F."/>
            <person name="Reinhardt R."/>
        </authorList>
    </citation>
    <scope>NUCLEOTIDE SEQUENCE [LARGE SCALE GENOMIC DNA]</scope>
    <source>
        <strain>DSM 19018 / LMG 30748 / EbN1</strain>
    </source>
</reference>
<dbReference type="EMBL" id="CR555306">
    <property type="protein sequence ID" value="CAI06723.1"/>
    <property type="molecule type" value="Genomic_DNA"/>
</dbReference>
<dbReference type="SMR" id="Q5P7I8"/>
<dbReference type="STRING" id="76114.ebA1141"/>
<dbReference type="KEGG" id="eba:ebA1141"/>
<dbReference type="eggNOG" id="COG1452">
    <property type="taxonomic scope" value="Bacteria"/>
</dbReference>
<dbReference type="HOGENOM" id="CLU_009039_0_0_4"/>
<dbReference type="OrthoDB" id="9760225at2"/>
<dbReference type="Proteomes" id="UP000006552">
    <property type="component" value="Chromosome"/>
</dbReference>
<dbReference type="GO" id="GO:0009279">
    <property type="term" value="C:cell outer membrane"/>
    <property type="evidence" value="ECO:0007669"/>
    <property type="project" value="UniProtKB-UniRule"/>
</dbReference>
<dbReference type="GO" id="GO:1990351">
    <property type="term" value="C:transporter complex"/>
    <property type="evidence" value="ECO:0007669"/>
    <property type="project" value="TreeGrafter"/>
</dbReference>
<dbReference type="GO" id="GO:0043165">
    <property type="term" value="P:Gram-negative-bacterium-type cell outer membrane assembly"/>
    <property type="evidence" value="ECO:0007669"/>
    <property type="project" value="UniProtKB-UniRule"/>
</dbReference>
<dbReference type="GO" id="GO:0015920">
    <property type="term" value="P:lipopolysaccharide transport"/>
    <property type="evidence" value="ECO:0007669"/>
    <property type="project" value="InterPro"/>
</dbReference>
<dbReference type="HAMAP" id="MF_01411">
    <property type="entry name" value="LPS_assembly_LptD"/>
    <property type="match status" value="1"/>
</dbReference>
<dbReference type="InterPro" id="IPR020889">
    <property type="entry name" value="LipoPS_assembly_LptD"/>
</dbReference>
<dbReference type="InterPro" id="IPR050218">
    <property type="entry name" value="LptD"/>
</dbReference>
<dbReference type="InterPro" id="IPR045659">
    <property type="entry name" value="LptD_2"/>
</dbReference>
<dbReference type="InterPro" id="IPR007543">
    <property type="entry name" value="LptD_C"/>
</dbReference>
<dbReference type="PANTHER" id="PTHR30189">
    <property type="entry name" value="LPS-ASSEMBLY PROTEIN"/>
    <property type="match status" value="1"/>
</dbReference>
<dbReference type="PANTHER" id="PTHR30189:SF1">
    <property type="entry name" value="LPS-ASSEMBLY PROTEIN LPTD"/>
    <property type="match status" value="1"/>
</dbReference>
<dbReference type="Pfam" id="PF04453">
    <property type="entry name" value="LptD"/>
    <property type="match status" value="1"/>
</dbReference>
<dbReference type="Pfam" id="PF19838">
    <property type="entry name" value="LptD_2"/>
    <property type="match status" value="1"/>
</dbReference>
<name>LPTD_AROAE</name>
<gene>
    <name evidence="1" type="primary">lptD</name>
    <name type="synonym">imp</name>
    <name type="synonym">ostA</name>
    <name type="ordered locus">AZOSEA06010</name>
    <name type="ORF">ebA1141</name>
</gene>
<protein>
    <recommendedName>
        <fullName evidence="1">LPS-assembly protein LptD</fullName>
    </recommendedName>
</protein>
<organism>
    <name type="scientific">Aromatoleum aromaticum (strain DSM 19018 / LMG 30748 / EbN1)</name>
    <name type="common">Azoarcus sp. (strain EbN1)</name>
    <dbReference type="NCBI Taxonomy" id="76114"/>
    <lineage>
        <taxon>Bacteria</taxon>
        <taxon>Pseudomonadati</taxon>
        <taxon>Pseudomonadota</taxon>
        <taxon>Betaproteobacteria</taxon>
        <taxon>Rhodocyclales</taxon>
        <taxon>Rhodocyclaceae</taxon>
        <taxon>Aromatoleum</taxon>
    </lineage>
</organism>
<feature type="chain" id="PRO_0000281588" description="LPS-assembly protein LptD">
    <location>
        <begin position="1"/>
        <end position="787"/>
    </location>
</feature>
<feature type="region of interest" description="Disordered" evidence="2">
    <location>
        <begin position="1"/>
        <end position="78"/>
    </location>
</feature>
<feature type="compositionally biased region" description="Low complexity" evidence="2">
    <location>
        <begin position="59"/>
        <end position="78"/>
    </location>
</feature>
<evidence type="ECO:0000255" key="1">
    <source>
        <dbReference type="HAMAP-Rule" id="MF_01411"/>
    </source>
</evidence>
<evidence type="ECO:0000256" key="2">
    <source>
        <dbReference type="SAM" id="MobiDB-lite"/>
    </source>
</evidence>
<evidence type="ECO:0000305" key="3"/>